<comment type="function">
    <text evidence="1">Catalyzes the NAD(P)-dependent oxidation of 4-(phosphooxy)-L-threonine (HTP) into 2-amino-3-oxo-4-(phosphooxy)butyric acid which spontaneously decarboxylates to form 3-amino-2-oxopropyl phosphate (AHAP).</text>
</comment>
<comment type="catalytic activity">
    <reaction evidence="1">
        <text>4-(phosphooxy)-L-threonine + NAD(+) = 3-amino-2-oxopropyl phosphate + CO2 + NADH</text>
        <dbReference type="Rhea" id="RHEA:32275"/>
        <dbReference type="ChEBI" id="CHEBI:16526"/>
        <dbReference type="ChEBI" id="CHEBI:57279"/>
        <dbReference type="ChEBI" id="CHEBI:57540"/>
        <dbReference type="ChEBI" id="CHEBI:57945"/>
        <dbReference type="ChEBI" id="CHEBI:58452"/>
        <dbReference type="EC" id="1.1.1.262"/>
    </reaction>
</comment>
<comment type="cofactor">
    <cofactor evidence="1">
        <name>Zn(2+)</name>
        <dbReference type="ChEBI" id="CHEBI:29105"/>
    </cofactor>
    <cofactor evidence="1">
        <name>Mg(2+)</name>
        <dbReference type="ChEBI" id="CHEBI:18420"/>
    </cofactor>
    <cofactor evidence="1">
        <name>Co(2+)</name>
        <dbReference type="ChEBI" id="CHEBI:48828"/>
    </cofactor>
    <text evidence="1">Binds 1 divalent metal cation per subunit. Can use ions such as Zn(2+), Mg(2+) or Co(2+).</text>
</comment>
<comment type="pathway">
    <text evidence="1">Cofactor biosynthesis; pyridoxine 5'-phosphate biosynthesis; pyridoxine 5'-phosphate from D-erythrose 4-phosphate: step 4/5.</text>
</comment>
<comment type="subunit">
    <text evidence="1">Homodimer.</text>
</comment>
<comment type="subcellular location">
    <subcellularLocation>
        <location evidence="1">Cytoplasm</location>
    </subcellularLocation>
</comment>
<comment type="miscellaneous">
    <text evidence="1">The active site is located at the dimer interface.</text>
</comment>
<comment type="similarity">
    <text evidence="1">Belongs to the PdxA family.</text>
</comment>
<organism>
    <name type="scientific">Shigella flexneri serotype 5b (strain 8401)</name>
    <dbReference type="NCBI Taxonomy" id="373384"/>
    <lineage>
        <taxon>Bacteria</taxon>
        <taxon>Pseudomonadati</taxon>
        <taxon>Pseudomonadota</taxon>
        <taxon>Gammaproteobacteria</taxon>
        <taxon>Enterobacterales</taxon>
        <taxon>Enterobacteriaceae</taxon>
        <taxon>Shigella</taxon>
    </lineage>
</organism>
<keyword id="KW-0170">Cobalt</keyword>
<keyword id="KW-0963">Cytoplasm</keyword>
<keyword id="KW-0460">Magnesium</keyword>
<keyword id="KW-0479">Metal-binding</keyword>
<keyword id="KW-0520">NAD</keyword>
<keyword id="KW-0521">NADP</keyword>
<keyword id="KW-0560">Oxidoreductase</keyword>
<keyword id="KW-0664">Pyridoxine biosynthesis</keyword>
<keyword id="KW-0862">Zinc</keyword>
<gene>
    <name evidence="1" type="primary">pdxA</name>
    <name type="ordered locus">SFV_0046</name>
</gene>
<proteinExistence type="inferred from homology"/>
<dbReference type="EC" id="1.1.1.262" evidence="1"/>
<dbReference type="EMBL" id="CP000266">
    <property type="protein sequence ID" value="ABF02333.1"/>
    <property type="molecule type" value="Genomic_DNA"/>
</dbReference>
<dbReference type="RefSeq" id="WP_000241261.1">
    <property type="nucleotide sequence ID" value="NC_008258.1"/>
</dbReference>
<dbReference type="SMR" id="Q0T8E3"/>
<dbReference type="KEGG" id="sfv:SFV_0046"/>
<dbReference type="HOGENOM" id="CLU_040168_1_0_6"/>
<dbReference type="UniPathway" id="UPA00244">
    <property type="reaction ID" value="UER00312"/>
</dbReference>
<dbReference type="Proteomes" id="UP000000659">
    <property type="component" value="Chromosome"/>
</dbReference>
<dbReference type="GO" id="GO:0005737">
    <property type="term" value="C:cytoplasm"/>
    <property type="evidence" value="ECO:0007669"/>
    <property type="project" value="UniProtKB-SubCell"/>
</dbReference>
<dbReference type="GO" id="GO:0050570">
    <property type="term" value="F:4-hydroxythreonine-4-phosphate dehydrogenase activity"/>
    <property type="evidence" value="ECO:0007669"/>
    <property type="project" value="UniProtKB-UniRule"/>
</dbReference>
<dbReference type="GO" id="GO:0050897">
    <property type="term" value="F:cobalt ion binding"/>
    <property type="evidence" value="ECO:0007669"/>
    <property type="project" value="UniProtKB-UniRule"/>
</dbReference>
<dbReference type="GO" id="GO:0000287">
    <property type="term" value="F:magnesium ion binding"/>
    <property type="evidence" value="ECO:0007669"/>
    <property type="project" value="UniProtKB-UniRule"/>
</dbReference>
<dbReference type="GO" id="GO:0051287">
    <property type="term" value="F:NAD binding"/>
    <property type="evidence" value="ECO:0007669"/>
    <property type="project" value="InterPro"/>
</dbReference>
<dbReference type="GO" id="GO:0008270">
    <property type="term" value="F:zinc ion binding"/>
    <property type="evidence" value="ECO:0007669"/>
    <property type="project" value="UniProtKB-UniRule"/>
</dbReference>
<dbReference type="GO" id="GO:0042823">
    <property type="term" value="P:pyridoxal phosphate biosynthetic process"/>
    <property type="evidence" value="ECO:0007669"/>
    <property type="project" value="UniProtKB-UniRule"/>
</dbReference>
<dbReference type="GO" id="GO:0008615">
    <property type="term" value="P:pyridoxine biosynthetic process"/>
    <property type="evidence" value="ECO:0007669"/>
    <property type="project" value="UniProtKB-UniRule"/>
</dbReference>
<dbReference type="FunFam" id="3.40.718.10:FF:000010">
    <property type="entry name" value="4-hydroxythreonine-4-phosphate dehydrogenase"/>
    <property type="match status" value="1"/>
</dbReference>
<dbReference type="Gene3D" id="3.40.718.10">
    <property type="entry name" value="Isopropylmalate Dehydrogenase"/>
    <property type="match status" value="1"/>
</dbReference>
<dbReference type="HAMAP" id="MF_00536">
    <property type="entry name" value="PdxA"/>
    <property type="match status" value="1"/>
</dbReference>
<dbReference type="InterPro" id="IPR037510">
    <property type="entry name" value="PdxA"/>
</dbReference>
<dbReference type="InterPro" id="IPR005255">
    <property type="entry name" value="PdxA_fam"/>
</dbReference>
<dbReference type="NCBIfam" id="TIGR00557">
    <property type="entry name" value="pdxA"/>
    <property type="match status" value="1"/>
</dbReference>
<dbReference type="PANTHER" id="PTHR30004">
    <property type="entry name" value="4-HYDROXYTHREONINE-4-PHOSPHATE DEHYDROGENASE"/>
    <property type="match status" value="1"/>
</dbReference>
<dbReference type="PANTHER" id="PTHR30004:SF5">
    <property type="entry name" value="4-HYDROXYTHREONINE-4-PHOSPHATE DEHYDROGENASE"/>
    <property type="match status" value="1"/>
</dbReference>
<dbReference type="Pfam" id="PF04166">
    <property type="entry name" value="PdxA"/>
    <property type="match status" value="1"/>
</dbReference>
<dbReference type="SUPFAM" id="SSF53659">
    <property type="entry name" value="Isocitrate/Isopropylmalate dehydrogenase-like"/>
    <property type="match status" value="1"/>
</dbReference>
<reference key="1">
    <citation type="journal article" date="2006" name="BMC Genomics">
        <title>Complete genome sequence of Shigella flexneri 5b and comparison with Shigella flexneri 2a.</title>
        <authorList>
            <person name="Nie H."/>
            <person name="Yang F."/>
            <person name="Zhang X."/>
            <person name="Yang J."/>
            <person name="Chen L."/>
            <person name="Wang J."/>
            <person name="Xiong Z."/>
            <person name="Peng J."/>
            <person name="Sun L."/>
            <person name="Dong J."/>
            <person name="Xue Y."/>
            <person name="Xu X."/>
            <person name="Chen S."/>
            <person name="Yao Z."/>
            <person name="Shen Y."/>
            <person name="Jin Q."/>
        </authorList>
    </citation>
    <scope>NUCLEOTIDE SEQUENCE [LARGE SCALE GENOMIC DNA]</scope>
    <source>
        <strain>8401</strain>
    </source>
</reference>
<accession>Q0T8E3</accession>
<evidence type="ECO:0000255" key="1">
    <source>
        <dbReference type="HAMAP-Rule" id="MF_00536"/>
    </source>
</evidence>
<sequence length="329" mass="35239">MVKTQRVVITPGEPAGIGPDLVVQLAQREWPVELVVCADATLLTDRAAMLGLPLTLRPYSPNSPAQPQTTGTLTLLPVALRESVTAGQLAIENGHYVVETLARACDGCLNGEFAALITGPVHKGVINDASIPFTGHTEFFEERSQAKKVVMMLATEELRVALATTHLPLRDIADAITPALLHEVIAILHHDLRTKFGIAEPRILVCGLNPHAGEGGHMGTEEIDTIIPVLDELRAQGMKLNGPLPADTLFQPKYLDNADAVLAMYHDQGLPVLKYQGFGRGVNITLGLPFIRTSVDHGTALELAGRGEADVGSFITALNLAIKMIVNTQ</sequence>
<protein>
    <recommendedName>
        <fullName evidence="1">4-hydroxythreonine-4-phosphate dehydrogenase</fullName>
        <ecNumber evidence="1">1.1.1.262</ecNumber>
    </recommendedName>
    <alternativeName>
        <fullName evidence="1">4-(phosphohydroxy)-L-threonine dehydrogenase</fullName>
    </alternativeName>
</protein>
<name>PDXA_SHIF8</name>
<feature type="chain" id="PRO_1000051516" description="4-hydroxythreonine-4-phosphate dehydrogenase">
    <location>
        <begin position="1"/>
        <end position="329"/>
    </location>
</feature>
<feature type="binding site" evidence="1">
    <location>
        <position position="136"/>
    </location>
    <ligand>
        <name>substrate</name>
    </ligand>
</feature>
<feature type="binding site" evidence="1">
    <location>
        <position position="137"/>
    </location>
    <ligand>
        <name>substrate</name>
    </ligand>
</feature>
<feature type="binding site" evidence="1">
    <location>
        <position position="166"/>
    </location>
    <ligand>
        <name>a divalent metal cation</name>
        <dbReference type="ChEBI" id="CHEBI:60240"/>
        <note>ligand shared between dimeric partners</note>
    </ligand>
</feature>
<feature type="binding site" evidence="1">
    <location>
        <position position="211"/>
    </location>
    <ligand>
        <name>a divalent metal cation</name>
        <dbReference type="ChEBI" id="CHEBI:60240"/>
        <note>ligand shared between dimeric partners</note>
    </ligand>
</feature>
<feature type="binding site" evidence="1">
    <location>
        <position position="266"/>
    </location>
    <ligand>
        <name>a divalent metal cation</name>
        <dbReference type="ChEBI" id="CHEBI:60240"/>
        <note>ligand shared between dimeric partners</note>
    </ligand>
</feature>
<feature type="binding site" evidence="1">
    <location>
        <position position="274"/>
    </location>
    <ligand>
        <name>substrate</name>
    </ligand>
</feature>
<feature type="binding site" evidence="1">
    <location>
        <position position="283"/>
    </location>
    <ligand>
        <name>substrate</name>
    </ligand>
</feature>
<feature type="binding site" evidence="1">
    <location>
        <position position="292"/>
    </location>
    <ligand>
        <name>substrate</name>
    </ligand>
</feature>